<reference key="1">
    <citation type="journal article" date="2001" name="DNA Res.">
        <title>Complete genomic sequence of the filamentous nitrogen-fixing cyanobacterium Anabaena sp. strain PCC 7120.</title>
        <authorList>
            <person name="Kaneko T."/>
            <person name="Nakamura Y."/>
            <person name="Wolk C.P."/>
            <person name="Kuritz T."/>
            <person name="Sasamoto S."/>
            <person name="Watanabe A."/>
            <person name="Iriguchi M."/>
            <person name="Ishikawa A."/>
            <person name="Kawashima K."/>
            <person name="Kimura T."/>
            <person name="Kishida Y."/>
            <person name="Kohara M."/>
            <person name="Matsumoto M."/>
            <person name="Matsuno A."/>
            <person name="Muraki A."/>
            <person name="Nakazaki N."/>
            <person name="Shimpo S."/>
            <person name="Sugimoto M."/>
            <person name="Takazawa M."/>
            <person name="Yamada M."/>
            <person name="Yasuda M."/>
            <person name="Tabata S."/>
        </authorList>
    </citation>
    <scope>NUCLEOTIDE SEQUENCE [LARGE SCALE GENOMIC DNA]</scope>
    <source>
        <strain>PCC 7120 / SAG 25.82 / UTEX 2576</strain>
    </source>
</reference>
<keyword id="KW-0997">Cell inner membrane</keyword>
<keyword id="KW-1003">Cell membrane</keyword>
<keyword id="KW-0406">Ion transport</keyword>
<keyword id="KW-0472">Membrane</keyword>
<keyword id="KW-0614">Plasmid</keyword>
<keyword id="KW-1185">Reference proteome</keyword>
<keyword id="KW-0769">Symport</keyword>
<keyword id="KW-0812">Transmembrane</keyword>
<keyword id="KW-1133">Transmembrane helix</keyword>
<keyword id="KW-0813">Transport</keyword>
<protein>
    <recommendedName>
        <fullName evidence="1">Divalent metal cation transporter MntH</fullName>
    </recommendedName>
</protein>
<name>MNTH_NOSS1</name>
<comment type="function">
    <text evidence="1">H(+)-stimulated, divalent metal cation uptake system.</text>
</comment>
<comment type="subcellular location">
    <subcellularLocation>
        <location evidence="1">Cell inner membrane</location>
        <topology evidence="1">Multi-pass membrane protein</topology>
    </subcellularLocation>
</comment>
<comment type="similarity">
    <text evidence="1">Belongs to the NRAMP family.</text>
</comment>
<dbReference type="EMBL" id="AP003602">
    <property type="protein sequence ID" value="BAB77244.1"/>
    <property type="molecule type" value="Genomic_DNA"/>
</dbReference>
<dbReference type="PIR" id="AF2539">
    <property type="entry name" value="AF2539"/>
</dbReference>
<dbReference type="RefSeq" id="WP_010993929.1">
    <property type="nucleotide sequence ID" value="NZ_RSCN01000012.1"/>
</dbReference>
<dbReference type="SMR" id="Q8ZSB0"/>
<dbReference type="KEGG" id="ana:all7601"/>
<dbReference type="OrthoDB" id="9787548at2"/>
<dbReference type="Proteomes" id="UP000002483">
    <property type="component" value="Plasmid pCC7120beta"/>
</dbReference>
<dbReference type="GO" id="GO:0005886">
    <property type="term" value="C:plasma membrane"/>
    <property type="evidence" value="ECO:0007669"/>
    <property type="project" value="UniProtKB-SubCell"/>
</dbReference>
<dbReference type="GO" id="GO:0015086">
    <property type="term" value="F:cadmium ion transmembrane transporter activity"/>
    <property type="evidence" value="ECO:0007669"/>
    <property type="project" value="TreeGrafter"/>
</dbReference>
<dbReference type="GO" id="GO:0005384">
    <property type="term" value="F:manganese ion transmembrane transporter activity"/>
    <property type="evidence" value="ECO:0007669"/>
    <property type="project" value="TreeGrafter"/>
</dbReference>
<dbReference type="GO" id="GO:0046872">
    <property type="term" value="F:metal ion binding"/>
    <property type="evidence" value="ECO:0007669"/>
    <property type="project" value="UniProtKB-UniRule"/>
</dbReference>
<dbReference type="GO" id="GO:0015293">
    <property type="term" value="F:symporter activity"/>
    <property type="evidence" value="ECO:0007669"/>
    <property type="project" value="UniProtKB-UniRule"/>
</dbReference>
<dbReference type="GO" id="GO:0034755">
    <property type="term" value="P:iron ion transmembrane transport"/>
    <property type="evidence" value="ECO:0007669"/>
    <property type="project" value="TreeGrafter"/>
</dbReference>
<dbReference type="HAMAP" id="MF_00221">
    <property type="entry name" value="NRAMP"/>
    <property type="match status" value="1"/>
</dbReference>
<dbReference type="InterPro" id="IPR001046">
    <property type="entry name" value="NRAMP_fam"/>
</dbReference>
<dbReference type="NCBIfam" id="TIGR01197">
    <property type="entry name" value="nramp"/>
    <property type="match status" value="1"/>
</dbReference>
<dbReference type="NCBIfam" id="NF037982">
    <property type="entry name" value="Nramp_1"/>
    <property type="match status" value="1"/>
</dbReference>
<dbReference type="NCBIfam" id="NF001923">
    <property type="entry name" value="PRK00701.1"/>
    <property type="match status" value="1"/>
</dbReference>
<dbReference type="PANTHER" id="PTHR11706:SF33">
    <property type="entry name" value="NATURAL RESISTANCE-ASSOCIATED MACROPHAGE PROTEIN 2"/>
    <property type="match status" value="1"/>
</dbReference>
<dbReference type="PANTHER" id="PTHR11706">
    <property type="entry name" value="SOLUTE CARRIER PROTEIN FAMILY 11 MEMBER"/>
    <property type="match status" value="1"/>
</dbReference>
<dbReference type="Pfam" id="PF01566">
    <property type="entry name" value="Nramp"/>
    <property type="match status" value="1"/>
</dbReference>
<dbReference type="PRINTS" id="PR00447">
    <property type="entry name" value="NATRESASSCMP"/>
</dbReference>
<geneLocation type="plasmid">
    <name>pCC7120beta</name>
</geneLocation>
<sequence>MTPPENRPSLPEVHRSIRVPNSNSFWRKMLAYAGPGYLVSVGYIDPGNWATDIAGGSKFGYTLLTVILLSNLMAILLQSLCVRLGVATGRDLAQACRDYFSPKVSFCLWVLCEIAIAACDLAELLGSAIALQLLFVIPLIWGVCITALDVLVLLFLQHKGFRYTEALVIMLVATVGICFTAEILFSRPDMGGILLGYLPKKEILQNPEMLYIAIGILGATVMPHNLYLHSSIVQTRDWQPTTEKRWEAIKFGTIDSTFALSLALFINSAILIVSAATFHFSGNQNVAEIQDAYKLLSPLLGVSAASAIFGIALLASGQSSTLTATLAGQIVMEGFLQFRLPSWLRRLITRLLAIIPALITIILFGENSTSSLIVLSQVILSLQLPFAVIPLVMFTSNRRLMGEFVNPLWLKSLAWLVAIVIVGLNAWLLLQSLWGWLLQVPS</sequence>
<proteinExistence type="inferred from homology"/>
<evidence type="ECO:0000255" key="1">
    <source>
        <dbReference type="HAMAP-Rule" id="MF_00221"/>
    </source>
</evidence>
<accession>Q8ZSB0</accession>
<organism>
    <name type="scientific">Nostoc sp. (strain PCC 7120 / SAG 25.82 / UTEX 2576)</name>
    <dbReference type="NCBI Taxonomy" id="103690"/>
    <lineage>
        <taxon>Bacteria</taxon>
        <taxon>Bacillati</taxon>
        <taxon>Cyanobacteriota</taxon>
        <taxon>Cyanophyceae</taxon>
        <taxon>Nostocales</taxon>
        <taxon>Nostocaceae</taxon>
        <taxon>Nostoc</taxon>
    </lineage>
</organism>
<feature type="chain" id="PRO_0000212610" description="Divalent metal cation transporter MntH">
    <location>
        <begin position="1"/>
        <end position="442"/>
    </location>
</feature>
<feature type="transmembrane region" description="Helical" evidence="1">
    <location>
        <begin position="29"/>
        <end position="49"/>
    </location>
</feature>
<feature type="transmembrane region" description="Helical" evidence="1">
    <location>
        <begin position="62"/>
        <end position="82"/>
    </location>
</feature>
<feature type="transmembrane region" description="Helical" evidence="1">
    <location>
        <begin position="106"/>
        <end position="126"/>
    </location>
</feature>
<feature type="transmembrane region" description="Helical" evidence="1">
    <location>
        <begin position="135"/>
        <end position="155"/>
    </location>
</feature>
<feature type="transmembrane region" description="Helical" evidence="1">
    <location>
        <begin position="166"/>
        <end position="186"/>
    </location>
</feature>
<feature type="transmembrane region" description="Helical" evidence="1">
    <location>
        <begin position="209"/>
        <end position="229"/>
    </location>
</feature>
<feature type="transmembrane region" description="Helical" evidence="1">
    <location>
        <begin position="258"/>
        <end position="278"/>
    </location>
</feature>
<feature type="transmembrane region" description="Helical" evidence="1">
    <location>
        <begin position="295"/>
        <end position="315"/>
    </location>
</feature>
<feature type="transmembrane region" description="Helical" evidence="1">
    <location>
        <begin position="347"/>
        <end position="367"/>
    </location>
</feature>
<feature type="transmembrane region" description="Helical" evidence="1">
    <location>
        <begin position="372"/>
        <end position="392"/>
    </location>
</feature>
<feature type="transmembrane region" description="Helical" evidence="1">
    <location>
        <begin position="413"/>
        <end position="433"/>
    </location>
</feature>
<gene>
    <name evidence="1" type="primary">mntH</name>
    <name type="ordered locus">all7601</name>
</gene>